<gene>
    <name type="primary">SHE2</name>
    <name type="ordered locus">AEL307C</name>
</gene>
<feature type="chain" id="PRO_0000408916" description="SWI5-dependent HO expression protein 2">
    <location>
        <begin position="1"/>
        <end position="279"/>
    </location>
</feature>
<feature type="region of interest" description="Disordered" evidence="3">
    <location>
        <begin position="1"/>
        <end position="31"/>
    </location>
</feature>
<feature type="compositionally biased region" description="Polar residues" evidence="3">
    <location>
        <begin position="1"/>
        <end position="12"/>
    </location>
</feature>
<keyword id="KW-0963">Cytoplasm</keyword>
<keyword id="KW-0509">mRNA transport</keyword>
<keyword id="KW-0539">Nucleus</keyword>
<keyword id="KW-1185">Reference proteome</keyword>
<keyword id="KW-0694">RNA-binding</keyword>
<keyword id="KW-0813">Transport</keyword>
<accession>Q758R0</accession>
<sequence length="279" mass="33146">MPIPDMSSQYPHQQEDMSQEEEPRGRKPQSMVDQEKQDYLDFIVPRLQITGKILQLTEEVIQEQANYISRYIDFLNKYINYQRKVSTLRFERATLIKYVKKLRFLNDFLYTYNADVNMITEPLQKLVRPLGSFFIRYLEIIDLLNYYLTQSLRNETISKTLNQDLVLSQECIAMADKTYRVYVKFVQWFIESSSSVTTGDLTMEIVQFTRKCAVEDGIDLGETDDVLLQEVQLVTSSEEFEDLLEKWQQVLHFQCADLDDTFNDNIRHWSELFDKKKEK</sequence>
<evidence type="ECO:0000250" key="1"/>
<evidence type="ECO:0000250" key="2">
    <source>
        <dbReference type="UniProtKB" id="P36068"/>
    </source>
</evidence>
<evidence type="ECO:0000256" key="3">
    <source>
        <dbReference type="SAM" id="MobiDB-lite"/>
    </source>
</evidence>
<evidence type="ECO:0000305" key="4"/>
<dbReference type="EMBL" id="AE016818">
    <property type="protein sequence ID" value="AAS52377.1"/>
    <property type="molecule type" value="Genomic_DNA"/>
</dbReference>
<dbReference type="RefSeq" id="NP_984553.1">
    <property type="nucleotide sequence ID" value="NM_209906.1"/>
</dbReference>
<dbReference type="SMR" id="Q758R0"/>
<dbReference type="FunCoup" id="Q758R0">
    <property type="interactions" value="116"/>
</dbReference>
<dbReference type="STRING" id="284811.Q758R0"/>
<dbReference type="EnsemblFungi" id="AAS52377">
    <property type="protein sequence ID" value="AAS52377"/>
    <property type="gene ID" value="AGOS_AEL307C"/>
</dbReference>
<dbReference type="GeneID" id="4620728"/>
<dbReference type="KEGG" id="ago:AGOS_AEL307C"/>
<dbReference type="eggNOG" id="ENOG502RXWH">
    <property type="taxonomic scope" value="Eukaryota"/>
</dbReference>
<dbReference type="HOGENOM" id="CLU_1129832_0_0_1"/>
<dbReference type="InParanoid" id="Q758R0"/>
<dbReference type="OMA" id="HFVKFTQ"/>
<dbReference type="OrthoDB" id="4041888at2759"/>
<dbReference type="Proteomes" id="UP000000591">
    <property type="component" value="Chromosome V"/>
</dbReference>
<dbReference type="GO" id="GO:0005934">
    <property type="term" value="C:cellular bud tip"/>
    <property type="evidence" value="ECO:0007669"/>
    <property type="project" value="EnsemblFungi"/>
</dbReference>
<dbReference type="GO" id="GO:0005737">
    <property type="term" value="C:cytoplasm"/>
    <property type="evidence" value="ECO:0007669"/>
    <property type="project" value="UniProtKB-SubCell"/>
</dbReference>
<dbReference type="GO" id="GO:0005634">
    <property type="term" value="C:nucleus"/>
    <property type="evidence" value="ECO:0007669"/>
    <property type="project" value="UniProtKB-SubCell"/>
</dbReference>
<dbReference type="GO" id="GO:0008289">
    <property type="term" value="F:lipid binding"/>
    <property type="evidence" value="ECO:0007669"/>
    <property type="project" value="EnsemblFungi"/>
</dbReference>
<dbReference type="GO" id="GO:1990825">
    <property type="term" value="F:sequence-specific mRNA binding"/>
    <property type="evidence" value="ECO:0007669"/>
    <property type="project" value="EnsemblFungi"/>
</dbReference>
<dbReference type="GO" id="GO:0008298">
    <property type="term" value="P:intracellular mRNA localization"/>
    <property type="evidence" value="ECO:0007669"/>
    <property type="project" value="EnsemblFungi"/>
</dbReference>
<dbReference type="GO" id="GO:0007533">
    <property type="term" value="P:mating type switching"/>
    <property type="evidence" value="ECO:0007669"/>
    <property type="project" value="EnsemblFungi"/>
</dbReference>
<dbReference type="GO" id="GO:0051028">
    <property type="term" value="P:mRNA transport"/>
    <property type="evidence" value="ECO:0007669"/>
    <property type="project" value="UniProtKB-KW"/>
</dbReference>
<dbReference type="Gene3D" id="1.20.200.20">
    <property type="entry name" value="She2 domain"/>
    <property type="match status" value="1"/>
</dbReference>
<dbReference type="InterPro" id="IPR024261">
    <property type="entry name" value="RNA-bd_She2"/>
</dbReference>
<dbReference type="InterPro" id="IPR036827">
    <property type="entry name" value="She2_dom_sf"/>
</dbReference>
<dbReference type="Pfam" id="PF11435">
    <property type="entry name" value="She2p"/>
    <property type="match status" value="1"/>
</dbReference>
<dbReference type="SUPFAM" id="SSF116942">
    <property type="entry name" value="RNA-binding protein She2p"/>
    <property type="match status" value="1"/>
</dbReference>
<proteinExistence type="inferred from homology"/>
<organism>
    <name type="scientific">Eremothecium gossypii (strain ATCC 10895 / CBS 109.51 / FGSC 9923 / NRRL Y-1056)</name>
    <name type="common">Yeast</name>
    <name type="synonym">Ashbya gossypii</name>
    <dbReference type="NCBI Taxonomy" id="284811"/>
    <lineage>
        <taxon>Eukaryota</taxon>
        <taxon>Fungi</taxon>
        <taxon>Dikarya</taxon>
        <taxon>Ascomycota</taxon>
        <taxon>Saccharomycotina</taxon>
        <taxon>Saccharomycetes</taxon>
        <taxon>Saccharomycetales</taxon>
        <taxon>Saccharomycetaceae</taxon>
        <taxon>Eremothecium</taxon>
    </lineage>
</organism>
<protein>
    <recommendedName>
        <fullName>SWI5-dependent HO expression protein 2</fullName>
    </recommendedName>
</protein>
<comment type="function">
    <text evidence="1">RNA-binding protein that binds specific mRNAs including the ASH1 mRNA, coding for a repressor of the HO endonuclease. Part of the mRNA localization machinery that restricts accumulation of certain proteins to the bud and in the daughter cell (By similarity).</text>
</comment>
<comment type="subunit">
    <text evidence="1">Homodimer and homotetramer.</text>
</comment>
<comment type="subcellular location">
    <subcellularLocation>
        <location evidence="2">Cytoplasm</location>
    </subcellularLocation>
    <subcellularLocation>
        <location evidence="2">Nucleus</location>
    </subcellularLocation>
    <text evidence="2">Shuttles between the nucleus and cytoplasm and is exported in an mRNA-dependent manner. The presence in the nucleus is essential for PUF6 and LOC1 to bind the ASH1 mRNA.</text>
</comment>
<comment type="similarity">
    <text evidence="4">Belongs to the SHE2 family.</text>
</comment>
<reference key="1">
    <citation type="journal article" date="2004" name="Science">
        <title>The Ashbya gossypii genome as a tool for mapping the ancient Saccharomyces cerevisiae genome.</title>
        <authorList>
            <person name="Dietrich F.S."/>
            <person name="Voegeli S."/>
            <person name="Brachat S."/>
            <person name="Lerch A."/>
            <person name="Gates K."/>
            <person name="Steiner S."/>
            <person name="Mohr C."/>
            <person name="Poehlmann R."/>
            <person name="Luedi P."/>
            <person name="Choi S."/>
            <person name="Wing R.A."/>
            <person name="Flavier A."/>
            <person name="Gaffney T.D."/>
            <person name="Philippsen P."/>
        </authorList>
    </citation>
    <scope>NUCLEOTIDE SEQUENCE [LARGE SCALE GENOMIC DNA]</scope>
    <source>
        <strain>ATCC 10895 / CBS 109.51 / FGSC 9923 / NRRL Y-1056</strain>
    </source>
</reference>
<reference key="2">
    <citation type="journal article" date="2013" name="G3 (Bethesda)">
        <title>Genomes of Ashbya fungi isolated from insects reveal four mating-type loci, numerous translocations, lack of transposons, and distinct gene duplications.</title>
        <authorList>
            <person name="Dietrich F.S."/>
            <person name="Voegeli S."/>
            <person name="Kuo S."/>
            <person name="Philippsen P."/>
        </authorList>
    </citation>
    <scope>GENOME REANNOTATION</scope>
    <source>
        <strain>ATCC 10895 / CBS 109.51 / FGSC 9923 / NRRL Y-1056</strain>
    </source>
</reference>
<name>SHE2_EREGS</name>